<reference key="1">
    <citation type="journal article" date="2011" name="J. Bacteriol.">
        <title>Genome of Ochrobactrum anthropi ATCC 49188 T, a versatile opportunistic pathogen and symbiont of several eukaryotic hosts.</title>
        <authorList>
            <person name="Chain P.S."/>
            <person name="Lang D.M."/>
            <person name="Comerci D.J."/>
            <person name="Malfatti S.A."/>
            <person name="Vergez L.M."/>
            <person name="Shin M."/>
            <person name="Ugalde R.A."/>
            <person name="Garcia E."/>
            <person name="Tolmasky M.E."/>
        </authorList>
    </citation>
    <scope>NUCLEOTIDE SEQUENCE [LARGE SCALE GENOMIC DNA]</scope>
    <source>
        <strain>ATCC 49188 / DSM 6882 / CCUG 24695 / JCM 21032 / LMG 3331 / NBRC 15819 / NCTC 12168 / Alc 37</strain>
    </source>
</reference>
<name>GPMA_BRUA4</name>
<dbReference type="EC" id="5.4.2.11" evidence="1"/>
<dbReference type="EMBL" id="CP000758">
    <property type="protein sequence ID" value="ABS14046.1"/>
    <property type="molecule type" value="Genomic_DNA"/>
</dbReference>
<dbReference type="RefSeq" id="WP_010659395.1">
    <property type="nucleotide sequence ID" value="NC_009667.1"/>
</dbReference>
<dbReference type="SMR" id="A6WYJ2"/>
<dbReference type="STRING" id="439375.Oant_1329"/>
<dbReference type="KEGG" id="oan:Oant_1329"/>
<dbReference type="eggNOG" id="COG0588">
    <property type="taxonomic scope" value="Bacteria"/>
</dbReference>
<dbReference type="HOGENOM" id="CLU_033323_1_4_5"/>
<dbReference type="PhylomeDB" id="A6WYJ2"/>
<dbReference type="UniPathway" id="UPA00109">
    <property type="reaction ID" value="UER00186"/>
</dbReference>
<dbReference type="Proteomes" id="UP000002301">
    <property type="component" value="Chromosome 1"/>
</dbReference>
<dbReference type="GO" id="GO:0004619">
    <property type="term" value="F:phosphoglycerate mutase activity"/>
    <property type="evidence" value="ECO:0007669"/>
    <property type="project" value="UniProtKB-EC"/>
</dbReference>
<dbReference type="GO" id="GO:0006094">
    <property type="term" value="P:gluconeogenesis"/>
    <property type="evidence" value="ECO:0007669"/>
    <property type="project" value="UniProtKB-UniRule"/>
</dbReference>
<dbReference type="GO" id="GO:0006096">
    <property type="term" value="P:glycolytic process"/>
    <property type="evidence" value="ECO:0007669"/>
    <property type="project" value="UniProtKB-UniRule"/>
</dbReference>
<dbReference type="CDD" id="cd07067">
    <property type="entry name" value="HP_PGM_like"/>
    <property type="match status" value="1"/>
</dbReference>
<dbReference type="Gene3D" id="3.40.50.1240">
    <property type="entry name" value="Phosphoglycerate mutase-like"/>
    <property type="match status" value="1"/>
</dbReference>
<dbReference type="HAMAP" id="MF_01039">
    <property type="entry name" value="PGAM_GpmA"/>
    <property type="match status" value="1"/>
</dbReference>
<dbReference type="InterPro" id="IPR013078">
    <property type="entry name" value="His_Pase_superF_clade-1"/>
</dbReference>
<dbReference type="InterPro" id="IPR029033">
    <property type="entry name" value="His_PPase_superfam"/>
</dbReference>
<dbReference type="InterPro" id="IPR001345">
    <property type="entry name" value="PG/BPGM_mutase_AS"/>
</dbReference>
<dbReference type="InterPro" id="IPR005952">
    <property type="entry name" value="Phosphogly_mut1"/>
</dbReference>
<dbReference type="NCBIfam" id="TIGR01258">
    <property type="entry name" value="pgm_1"/>
    <property type="match status" value="1"/>
</dbReference>
<dbReference type="NCBIfam" id="NF002339">
    <property type="entry name" value="PRK01295.1"/>
    <property type="match status" value="1"/>
</dbReference>
<dbReference type="PANTHER" id="PTHR11931">
    <property type="entry name" value="PHOSPHOGLYCERATE MUTASE"/>
    <property type="match status" value="1"/>
</dbReference>
<dbReference type="Pfam" id="PF00300">
    <property type="entry name" value="His_Phos_1"/>
    <property type="match status" value="1"/>
</dbReference>
<dbReference type="PIRSF" id="PIRSF000709">
    <property type="entry name" value="6PFK_2-Ptase"/>
    <property type="match status" value="1"/>
</dbReference>
<dbReference type="SMART" id="SM00855">
    <property type="entry name" value="PGAM"/>
    <property type="match status" value="1"/>
</dbReference>
<dbReference type="SUPFAM" id="SSF53254">
    <property type="entry name" value="Phosphoglycerate mutase-like"/>
    <property type="match status" value="1"/>
</dbReference>
<dbReference type="PROSITE" id="PS00175">
    <property type="entry name" value="PG_MUTASE"/>
    <property type="match status" value="1"/>
</dbReference>
<feature type="chain" id="PRO_1000064085" description="2,3-bisphosphoglycerate-dependent phosphoglycerate mutase">
    <location>
        <begin position="1"/>
        <end position="206"/>
    </location>
</feature>
<feature type="active site" description="Tele-phosphohistidine intermediate" evidence="1">
    <location>
        <position position="10"/>
    </location>
</feature>
<feature type="active site" description="Proton donor/acceptor" evidence="1">
    <location>
        <position position="88"/>
    </location>
</feature>
<feature type="binding site" evidence="1">
    <location>
        <begin position="9"/>
        <end position="16"/>
    </location>
    <ligand>
        <name>substrate</name>
    </ligand>
</feature>
<feature type="binding site" evidence="1">
    <location>
        <begin position="22"/>
        <end position="23"/>
    </location>
    <ligand>
        <name>substrate</name>
    </ligand>
</feature>
<feature type="binding site" evidence="1">
    <location>
        <position position="61"/>
    </location>
    <ligand>
        <name>substrate</name>
    </ligand>
</feature>
<feature type="binding site" evidence="1">
    <location>
        <begin position="88"/>
        <end position="91"/>
    </location>
    <ligand>
        <name>substrate</name>
    </ligand>
</feature>
<feature type="binding site" evidence="1">
    <location>
        <position position="99"/>
    </location>
    <ligand>
        <name>substrate</name>
    </ligand>
</feature>
<feature type="binding site" evidence="1">
    <location>
        <begin position="115"/>
        <end position="116"/>
    </location>
    <ligand>
        <name>substrate</name>
    </ligand>
</feature>
<feature type="binding site" evidence="1">
    <location>
        <begin position="159"/>
        <end position="160"/>
    </location>
    <ligand>
        <name>substrate</name>
    </ligand>
</feature>
<feature type="site" description="Transition state stabilizer" evidence="1">
    <location>
        <position position="158"/>
    </location>
</feature>
<proteinExistence type="inferred from homology"/>
<protein>
    <recommendedName>
        <fullName evidence="1">2,3-bisphosphoglycerate-dependent phosphoglycerate mutase</fullName>
        <shortName evidence="1">BPG-dependent PGAM</shortName>
        <shortName evidence="1">PGAM</shortName>
        <shortName evidence="1">Phosphoglyceromutase</shortName>
        <shortName evidence="1">dPGM</shortName>
        <ecNumber evidence="1">5.4.2.11</ecNumber>
    </recommendedName>
</protein>
<sequence>MSRTLVLVRHGQSEWNLKNLFTGWRDPGLTEQGHAEAKAAGQRLKAAGLKFDIAYTSALSRAQVTCQHILDQLGQSDLKTIRDQALNERDYGDLSGLNKDDARAKWGEEQVHIWRRSYDVPPPGGESLKDTGARVWPYYLHTVQPHVLRGETVLVAAHGNSLRALIMALDGLTPEQILKQELNTGVPVVYRLNADSTVASKEILEA</sequence>
<gene>
    <name evidence="1" type="primary">gpmA</name>
    <name type="ordered locus">Oant_1329</name>
</gene>
<accession>A6WYJ2</accession>
<comment type="function">
    <text evidence="1">Catalyzes the interconversion of 2-phosphoglycerate and 3-phosphoglycerate.</text>
</comment>
<comment type="catalytic activity">
    <reaction evidence="1">
        <text>(2R)-2-phosphoglycerate = (2R)-3-phosphoglycerate</text>
        <dbReference type="Rhea" id="RHEA:15901"/>
        <dbReference type="ChEBI" id="CHEBI:58272"/>
        <dbReference type="ChEBI" id="CHEBI:58289"/>
        <dbReference type="EC" id="5.4.2.11"/>
    </reaction>
</comment>
<comment type="pathway">
    <text evidence="1">Carbohydrate degradation; glycolysis; pyruvate from D-glyceraldehyde 3-phosphate: step 3/5.</text>
</comment>
<comment type="subunit">
    <text evidence="1">Homodimer.</text>
</comment>
<comment type="similarity">
    <text evidence="1">Belongs to the phosphoglycerate mutase family. BPG-dependent PGAM subfamily.</text>
</comment>
<organism>
    <name type="scientific">Brucella anthropi (strain ATCC 49188 / DSM 6882 / CCUG 24695 / JCM 21032 / LMG 3331 / NBRC 15819 / NCTC 12168 / Alc 37)</name>
    <name type="common">Ochrobactrum anthropi</name>
    <dbReference type="NCBI Taxonomy" id="439375"/>
    <lineage>
        <taxon>Bacteria</taxon>
        <taxon>Pseudomonadati</taxon>
        <taxon>Pseudomonadota</taxon>
        <taxon>Alphaproteobacteria</taxon>
        <taxon>Hyphomicrobiales</taxon>
        <taxon>Brucellaceae</taxon>
        <taxon>Brucella/Ochrobactrum group</taxon>
        <taxon>Brucella</taxon>
    </lineage>
</organism>
<evidence type="ECO:0000255" key="1">
    <source>
        <dbReference type="HAMAP-Rule" id="MF_01039"/>
    </source>
</evidence>
<keyword id="KW-0312">Gluconeogenesis</keyword>
<keyword id="KW-0324">Glycolysis</keyword>
<keyword id="KW-0413">Isomerase</keyword>
<keyword id="KW-1185">Reference proteome</keyword>